<proteinExistence type="inferred from homology"/>
<reference key="1">
    <citation type="journal article" date="2008" name="J. Bacteriol.">
        <title>Comparative genome sequence analysis of multidrug-resistant Acinetobacter baumannii.</title>
        <authorList>
            <person name="Adams M.D."/>
            <person name="Goglin K."/>
            <person name="Molyneaux N."/>
            <person name="Hujer K.M."/>
            <person name="Lavender H."/>
            <person name="Jamison J.J."/>
            <person name="MacDonald I.J."/>
            <person name="Martin K.M."/>
            <person name="Russo T."/>
            <person name="Campagnari A.A."/>
            <person name="Hujer A.M."/>
            <person name="Bonomo R.A."/>
            <person name="Gill S.R."/>
        </authorList>
    </citation>
    <scope>NUCLEOTIDE SEQUENCE [LARGE SCALE GENOMIC DNA]</scope>
    <source>
        <strain>AB307-0294</strain>
    </source>
</reference>
<organism>
    <name type="scientific">Acinetobacter baumannii (strain AB307-0294)</name>
    <dbReference type="NCBI Taxonomy" id="557600"/>
    <lineage>
        <taxon>Bacteria</taxon>
        <taxon>Pseudomonadati</taxon>
        <taxon>Pseudomonadota</taxon>
        <taxon>Gammaproteobacteria</taxon>
        <taxon>Moraxellales</taxon>
        <taxon>Moraxellaceae</taxon>
        <taxon>Acinetobacter</taxon>
        <taxon>Acinetobacter calcoaceticus/baumannii complex</taxon>
    </lineage>
</organism>
<gene>
    <name evidence="1" type="primary">leuC</name>
    <name type="ordered locus">ABBFA_003119</name>
</gene>
<sequence>MAGKTLYDKLWDDHVVTQRDDGSCLLYIDRHLLHEVTSPQAFEGLQLAGRQPWRLSANVATPDHNVPTSKKERDQGIAGIEDDTSRIQVQTLDDNCKAFNIVEFGINDIRQGIVHVVGPEQGLTLPGMTVVCGDSHTATHGAFGCLAHGIGTSEVEHVLATQCLVQKKSKNMLVRVDGVLGKGVTPKDVVLAIIGKIGTAGGTGYAIEFGGQVFRDMSIEGRMTVCNMAIEAGARVGMVAVDDKTIEYVKGRSYAPKGEQWEQAVAYWNTLHSDDDAVFDAVVELNGAEIEPQVSWGTSPEMVIPVSKAVPTLEQAKDDVQRNDWTRAYQYMGLNAGQALADIQLDRVFIGSCTNSRIEDIRAAAEVVKGRKVAPSIKQAMIVPGSGLVKQQAEKEGLDKIFLEAGFEWREPGCSMCLAMNADKLQPGEHCASTSNRNFEGRQGNGGRTHLVSPAMAAAAAIAGHFVDVRSF</sequence>
<protein>
    <recommendedName>
        <fullName evidence="1">3-isopropylmalate dehydratase large subunit</fullName>
        <ecNumber evidence="1">4.2.1.33</ecNumber>
    </recommendedName>
    <alternativeName>
        <fullName evidence="1">Alpha-IPM isomerase</fullName>
        <shortName evidence="1">IPMI</shortName>
    </alternativeName>
    <alternativeName>
        <fullName evidence="1">Isopropylmalate isomerase</fullName>
    </alternativeName>
</protein>
<comment type="function">
    <text evidence="1">Catalyzes the isomerization between 2-isopropylmalate and 3-isopropylmalate, via the formation of 2-isopropylmaleate.</text>
</comment>
<comment type="catalytic activity">
    <reaction evidence="1">
        <text>(2R,3S)-3-isopropylmalate = (2S)-2-isopropylmalate</text>
        <dbReference type="Rhea" id="RHEA:32287"/>
        <dbReference type="ChEBI" id="CHEBI:1178"/>
        <dbReference type="ChEBI" id="CHEBI:35121"/>
        <dbReference type="EC" id="4.2.1.33"/>
    </reaction>
</comment>
<comment type="cofactor">
    <cofactor evidence="1">
        <name>[4Fe-4S] cluster</name>
        <dbReference type="ChEBI" id="CHEBI:49883"/>
    </cofactor>
    <text evidence="1">Binds 1 [4Fe-4S] cluster per subunit.</text>
</comment>
<comment type="pathway">
    <text evidence="1">Amino-acid biosynthesis; L-leucine biosynthesis; L-leucine from 3-methyl-2-oxobutanoate: step 2/4.</text>
</comment>
<comment type="subunit">
    <text evidence="1">Heterodimer of LeuC and LeuD.</text>
</comment>
<comment type="similarity">
    <text evidence="1">Belongs to the aconitase/IPM isomerase family. LeuC type 1 subfamily.</text>
</comment>
<dbReference type="EC" id="4.2.1.33" evidence="1"/>
<dbReference type="EMBL" id="CP001172">
    <property type="protein sequence ID" value="ACJ57394.1"/>
    <property type="molecule type" value="Genomic_DNA"/>
</dbReference>
<dbReference type="RefSeq" id="WP_000907603.1">
    <property type="nucleotide sequence ID" value="NZ_CP001172.1"/>
</dbReference>
<dbReference type="SMR" id="B7H0T7"/>
<dbReference type="HOGENOM" id="CLU_006714_3_4_6"/>
<dbReference type="UniPathway" id="UPA00048">
    <property type="reaction ID" value="UER00071"/>
</dbReference>
<dbReference type="Proteomes" id="UP000006924">
    <property type="component" value="Chromosome"/>
</dbReference>
<dbReference type="GO" id="GO:0003861">
    <property type="term" value="F:3-isopropylmalate dehydratase activity"/>
    <property type="evidence" value="ECO:0007669"/>
    <property type="project" value="UniProtKB-UniRule"/>
</dbReference>
<dbReference type="GO" id="GO:0051539">
    <property type="term" value="F:4 iron, 4 sulfur cluster binding"/>
    <property type="evidence" value="ECO:0007669"/>
    <property type="project" value="UniProtKB-KW"/>
</dbReference>
<dbReference type="GO" id="GO:0046872">
    <property type="term" value="F:metal ion binding"/>
    <property type="evidence" value="ECO:0007669"/>
    <property type="project" value="UniProtKB-KW"/>
</dbReference>
<dbReference type="GO" id="GO:0009098">
    <property type="term" value="P:L-leucine biosynthetic process"/>
    <property type="evidence" value="ECO:0007669"/>
    <property type="project" value="UniProtKB-UniRule"/>
</dbReference>
<dbReference type="CDD" id="cd01583">
    <property type="entry name" value="IPMI"/>
    <property type="match status" value="1"/>
</dbReference>
<dbReference type="FunFam" id="3.30.499.10:FF:000007">
    <property type="entry name" value="3-isopropylmalate dehydratase large subunit"/>
    <property type="match status" value="1"/>
</dbReference>
<dbReference type="Gene3D" id="3.30.499.10">
    <property type="entry name" value="Aconitase, domain 3"/>
    <property type="match status" value="2"/>
</dbReference>
<dbReference type="HAMAP" id="MF_01026">
    <property type="entry name" value="LeuC_type1"/>
    <property type="match status" value="1"/>
</dbReference>
<dbReference type="InterPro" id="IPR004430">
    <property type="entry name" value="3-IsopropMal_deHydase_lsu"/>
</dbReference>
<dbReference type="InterPro" id="IPR015931">
    <property type="entry name" value="Acnase/IPM_dHydase_lsu_aba_1/3"/>
</dbReference>
<dbReference type="InterPro" id="IPR001030">
    <property type="entry name" value="Acoase/IPM_deHydtase_lsu_aba"/>
</dbReference>
<dbReference type="InterPro" id="IPR018136">
    <property type="entry name" value="Aconitase_4Fe-4S_BS"/>
</dbReference>
<dbReference type="InterPro" id="IPR036008">
    <property type="entry name" value="Aconitase_4Fe-4S_dom"/>
</dbReference>
<dbReference type="InterPro" id="IPR050067">
    <property type="entry name" value="IPM_dehydratase_rel_enz"/>
</dbReference>
<dbReference type="InterPro" id="IPR033941">
    <property type="entry name" value="IPMI_cat"/>
</dbReference>
<dbReference type="NCBIfam" id="TIGR00170">
    <property type="entry name" value="leuC"/>
    <property type="match status" value="1"/>
</dbReference>
<dbReference type="NCBIfam" id="NF004016">
    <property type="entry name" value="PRK05478.1"/>
    <property type="match status" value="1"/>
</dbReference>
<dbReference type="NCBIfam" id="NF009116">
    <property type="entry name" value="PRK12466.1"/>
    <property type="match status" value="1"/>
</dbReference>
<dbReference type="PANTHER" id="PTHR43822:SF9">
    <property type="entry name" value="3-ISOPROPYLMALATE DEHYDRATASE"/>
    <property type="match status" value="1"/>
</dbReference>
<dbReference type="PANTHER" id="PTHR43822">
    <property type="entry name" value="HOMOACONITASE, MITOCHONDRIAL-RELATED"/>
    <property type="match status" value="1"/>
</dbReference>
<dbReference type="Pfam" id="PF00330">
    <property type="entry name" value="Aconitase"/>
    <property type="match status" value="1"/>
</dbReference>
<dbReference type="PRINTS" id="PR00415">
    <property type="entry name" value="ACONITASE"/>
</dbReference>
<dbReference type="SUPFAM" id="SSF53732">
    <property type="entry name" value="Aconitase iron-sulfur domain"/>
    <property type="match status" value="1"/>
</dbReference>
<dbReference type="PROSITE" id="PS00450">
    <property type="entry name" value="ACONITASE_1"/>
    <property type="match status" value="1"/>
</dbReference>
<dbReference type="PROSITE" id="PS01244">
    <property type="entry name" value="ACONITASE_2"/>
    <property type="match status" value="1"/>
</dbReference>
<evidence type="ECO:0000255" key="1">
    <source>
        <dbReference type="HAMAP-Rule" id="MF_01026"/>
    </source>
</evidence>
<name>LEUC_ACIB3</name>
<accession>B7H0T7</accession>
<keyword id="KW-0004">4Fe-4S</keyword>
<keyword id="KW-0028">Amino-acid biosynthesis</keyword>
<keyword id="KW-0100">Branched-chain amino acid biosynthesis</keyword>
<keyword id="KW-0408">Iron</keyword>
<keyword id="KW-0411">Iron-sulfur</keyword>
<keyword id="KW-0432">Leucine biosynthesis</keyword>
<keyword id="KW-0456">Lyase</keyword>
<keyword id="KW-0479">Metal-binding</keyword>
<feature type="chain" id="PRO_1000135654" description="3-isopropylmalate dehydratase large subunit">
    <location>
        <begin position="1"/>
        <end position="472"/>
    </location>
</feature>
<feature type="binding site" evidence="1">
    <location>
        <position position="353"/>
    </location>
    <ligand>
        <name>[4Fe-4S] cluster</name>
        <dbReference type="ChEBI" id="CHEBI:49883"/>
    </ligand>
</feature>
<feature type="binding site" evidence="1">
    <location>
        <position position="414"/>
    </location>
    <ligand>
        <name>[4Fe-4S] cluster</name>
        <dbReference type="ChEBI" id="CHEBI:49883"/>
    </ligand>
</feature>
<feature type="binding site" evidence="1">
    <location>
        <position position="417"/>
    </location>
    <ligand>
        <name>[4Fe-4S] cluster</name>
        <dbReference type="ChEBI" id="CHEBI:49883"/>
    </ligand>
</feature>